<feature type="chain" id="PRO_0000180756" description="Glucose-6-phosphate isomerase">
    <location>
        <begin position="1"/>
        <end position="451"/>
    </location>
</feature>
<feature type="active site" description="Proton donor" evidence="1">
    <location>
        <position position="291"/>
    </location>
</feature>
<feature type="active site" evidence="1">
    <location>
        <position position="312"/>
    </location>
</feature>
<feature type="active site" evidence="1">
    <location>
        <position position="426"/>
    </location>
</feature>
<protein>
    <recommendedName>
        <fullName evidence="1">Glucose-6-phosphate isomerase</fullName>
        <shortName evidence="1">GPI</shortName>
        <ecNumber evidence="1">5.3.1.9</ecNumber>
    </recommendedName>
    <alternativeName>
        <fullName evidence="1">Phosphoglucose isomerase</fullName>
        <shortName evidence="1">PGI</shortName>
    </alternativeName>
    <alternativeName>
        <fullName evidence="1">Phosphohexose isomerase</fullName>
        <shortName evidence="1">PHI</shortName>
    </alternativeName>
</protein>
<dbReference type="EC" id="5.3.1.9" evidence="1"/>
<dbReference type="EMBL" id="AE008691">
    <property type="protein sequence ID" value="AAM24998.1"/>
    <property type="molecule type" value="Genomic_DNA"/>
</dbReference>
<dbReference type="RefSeq" id="WP_011025995.1">
    <property type="nucleotide sequence ID" value="NC_003869.1"/>
</dbReference>
<dbReference type="SMR" id="Q8R924"/>
<dbReference type="STRING" id="273068.TTE1806"/>
<dbReference type="KEGG" id="tte:TTE1806"/>
<dbReference type="eggNOG" id="COG0166">
    <property type="taxonomic scope" value="Bacteria"/>
</dbReference>
<dbReference type="HOGENOM" id="CLU_037303_0_1_9"/>
<dbReference type="OrthoDB" id="140919at2"/>
<dbReference type="UniPathway" id="UPA00109">
    <property type="reaction ID" value="UER00181"/>
</dbReference>
<dbReference type="UniPathway" id="UPA00138"/>
<dbReference type="Proteomes" id="UP000000555">
    <property type="component" value="Chromosome"/>
</dbReference>
<dbReference type="GO" id="GO:0005829">
    <property type="term" value="C:cytosol"/>
    <property type="evidence" value="ECO:0007669"/>
    <property type="project" value="TreeGrafter"/>
</dbReference>
<dbReference type="GO" id="GO:0097367">
    <property type="term" value="F:carbohydrate derivative binding"/>
    <property type="evidence" value="ECO:0007669"/>
    <property type="project" value="InterPro"/>
</dbReference>
<dbReference type="GO" id="GO:0004347">
    <property type="term" value="F:glucose-6-phosphate isomerase activity"/>
    <property type="evidence" value="ECO:0007669"/>
    <property type="project" value="UniProtKB-UniRule"/>
</dbReference>
<dbReference type="GO" id="GO:0048029">
    <property type="term" value="F:monosaccharide binding"/>
    <property type="evidence" value="ECO:0007669"/>
    <property type="project" value="TreeGrafter"/>
</dbReference>
<dbReference type="GO" id="GO:0006094">
    <property type="term" value="P:gluconeogenesis"/>
    <property type="evidence" value="ECO:0007669"/>
    <property type="project" value="UniProtKB-UniRule"/>
</dbReference>
<dbReference type="GO" id="GO:0051156">
    <property type="term" value="P:glucose 6-phosphate metabolic process"/>
    <property type="evidence" value="ECO:0007669"/>
    <property type="project" value="TreeGrafter"/>
</dbReference>
<dbReference type="GO" id="GO:0006096">
    <property type="term" value="P:glycolytic process"/>
    <property type="evidence" value="ECO:0007669"/>
    <property type="project" value="UniProtKB-UniRule"/>
</dbReference>
<dbReference type="CDD" id="cd05015">
    <property type="entry name" value="SIS_PGI_1"/>
    <property type="match status" value="1"/>
</dbReference>
<dbReference type="CDD" id="cd05016">
    <property type="entry name" value="SIS_PGI_2"/>
    <property type="match status" value="1"/>
</dbReference>
<dbReference type="FunFam" id="3.40.50.10490:FF:000015">
    <property type="entry name" value="Glucose-6-phosphate isomerase"/>
    <property type="match status" value="1"/>
</dbReference>
<dbReference type="FunFam" id="3.40.50.10490:FF:000016">
    <property type="entry name" value="Glucose-6-phosphate isomerase"/>
    <property type="match status" value="1"/>
</dbReference>
<dbReference type="Gene3D" id="3.40.50.10490">
    <property type="entry name" value="Glucose-6-phosphate isomerase like protein, domain 1"/>
    <property type="match status" value="2"/>
</dbReference>
<dbReference type="HAMAP" id="MF_00473">
    <property type="entry name" value="G6P_isomerase"/>
    <property type="match status" value="1"/>
</dbReference>
<dbReference type="InterPro" id="IPR001672">
    <property type="entry name" value="G6P_Isomerase"/>
</dbReference>
<dbReference type="InterPro" id="IPR018189">
    <property type="entry name" value="Phosphoglucose_isomerase_CS"/>
</dbReference>
<dbReference type="InterPro" id="IPR046348">
    <property type="entry name" value="SIS_dom_sf"/>
</dbReference>
<dbReference type="InterPro" id="IPR035476">
    <property type="entry name" value="SIS_PGI_1"/>
</dbReference>
<dbReference type="InterPro" id="IPR035482">
    <property type="entry name" value="SIS_PGI_2"/>
</dbReference>
<dbReference type="NCBIfam" id="NF010697">
    <property type="entry name" value="PRK14097.1"/>
    <property type="match status" value="1"/>
</dbReference>
<dbReference type="PANTHER" id="PTHR11469">
    <property type="entry name" value="GLUCOSE-6-PHOSPHATE ISOMERASE"/>
    <property type="match status" value="1"/>
</dbReference>
<dbReference type="PANTHER" id="PTHR11469:SF1">
    <property type="entry name" value="GLUCOSE-6-PHOSPHATE ISOMERASE"/>
    <property type="match status" value="1"/>
</dbReference>
<dbReference type="Pfam" id="PF00342">
    <property type="entry name" value="PGI"/>
    <property type="match status" value="1"/>
</dbReference>
<dbReference type="PRINTS" id="PR00662">
    <property type="entry name" value="G6PISOMERASE"/>
</dbReference>
<dbReference type="SUPFAM" id="SSF53697">
    <property type="entry name" value="SIS domain"/>
    <property type="match status" value="1"/>
</dbReference>
<dbReference type="PROSITE" id="PS00765">
    <property type="entry name" value="P_GLUCOSE_ISOMERASE_1"/>
    <property type="match status" value="1"/>
</dbReference>
<dbReference type="PROSITE" id="PS00174">
    <property type="entry name" value="P_GLUCOSE_ISOMERASE_2"/>
    <property type="match status" value="1"/>
</dbReference>
<dbReference type="PROSITE" id="PS51463">
    <property type="entry name" value="P_GLUCOSE_ISOMERASE_3"/>
    <property type="match status" value="1"/>
</dbReference>
<reference key="1">
    <citation type="journal article" date="2002" name="Genome Res.">
        <title>A complete sequence of the T. tengcongensis genome.</title>
        <authorList>
            <person name="Bao Q."/>
            <person name="Tian Y."/>
            <person name="Li W."/>
            <person name="Xu Z."/>
            <person name="Xuan Z."/>
            <person name="Hu S."/>
            <person name="Dong W."/>
            <person name="Yang J."/>
            <person name="Chen Y."/>
            <person name="Xue Y."/>
            <person name="Xu Y."/>
            <person name="Lai X."/>
            <person name="Huang L."/>
            <person name="Dong X."/>
            <person name="Ma Y."/>
            <person name="Ling L."/>
            <person name="Tan H."/>
            <person name="Chen R."/>
            <person name="Wang J."/>
            <person name="Yu J."/>
            <person name="Yang H."/>
        </authorList>
    </citation>
    <scope>NUCLEOTIDE SEQUENCE [LARGE SCALE GENOMIC DNA]</scope>
    <source>
        <strain>DSM 15242 / JCM 11007 / NBRC 100824 / MB4</strain>
    </source>
</reference>
<proteinExistence type="inferred from homology"/>
<accession>Q8R924</accession>
<organism>
    <name type="scientific">Caldanaerobacter subterraneus subsp. tengcongensis (strain DSM 15242 / JCM 11007 / NBRC 100824 / MB4)</name>
    <name type="common">Thermoanaerobacter tengcongensis</name>
    <dbReference type="NCBI Taxonomy" id="273068"/>
    <lineage>
        <taxon>Bacteria</taxon>
        <taxon>Bacillati</taxon>
        <taxon>Bacillota</taxon>
        <taxon>Clostridia</taxon>
        <taxon>Thermoanaerobacterales</taxon>
        <taxon>Thermoanaerobacteraceae</taxon>
        <taxon>Caldanaerobacter</taxon>
    </lineage>
</organism>
<keyword id="KW-0963">Cytoplasm</keyword>
<keyword id="KW-0312">Gluconeogenesis</keyword>
<keyword id="KW-0324">Glycolysis</keyword>
<keyword id="KW-0413">Isomerase</keyword>
<keyword id="KW-1185">Reference proteome</keyword>
<comment type="function">
    <text evidence="1">Catalyzes the reversible isomerization of glucose-6-phosphate to fructose-6-phosphate.</text>
</comment>
<comment type="catalytic activity">
    <reaction evidence="1">
        <text>alpha-D-glucose 6-phosphate = beta-D-fructose 6-phosphate</text>
        <dbReference type="Rhea" id="RHEA:11816"/>
        <dbReference type="ChEBI" id="CHEBI:57634"/>
        <dbReference type="ChEBI" id="CHEBI:58225"/>
        <dbReference type="EC" id="5.3.1.9"/>
    </reaction>
</comment>
<comment type="pathway">
    <text evidence="1">Carbohydrate biosynthesis; gluconeogenesis.</text>
</comment>
<comment type="pathway">
    <text evidence="1">Carbohydrate degradation; glycolysis; D-glyceraldehyde 3-phosphate and glycerone phosphate from D-glucose: step 2/4.</text>
</comment>
<comment type="subcellular location">
    <subcellularLocation>
        <location evidence="1">Cytoplasm</location>
    </subcellularLocation>
</comment>
<comment type="similarity">
    <text evidence="1">Belongs to the GPI family.</text>
</comment>
<gene>
    <name evidence="1" type="primary">pgi</name>
    <name type="ordered locus">TTE1806</name>
</gene>
<sequence>MKKLISFDYSKALPFIHPHEIEYMEKHAKLSLEMVLKANAQGNGFLGWVNLPRDYDRAEFERIKKAAHKIQSDSDVLVVIGIGGSYLGARAAIEMLSHSFYNLLPKGKRNTPEIYFAGNSISSTYLKDLLELIADKEVSINVISKSGTTTEPAIAFRVFRDFMEKKYGKDKARSRIYVTTDREKGALKKLADSEGYETFVIPDDVGGRYSVLTAVGLLPIAVAGINIDEMMEGAYEASTVYTKEDLSENISMQYAILRNILYRKGKAIEILVNYEPRLHYFAEWWKQLFGESEGKDQKGIYPASVDFTTDLHSMGQFIQEGSRNIFETVLNVEKPAKDIIINEDRDNIDGLNFLAGKTIDFVNKKAFEGTLLAHTDGGVPNLVVNIPEITPFYFGNLVYFFEMACAISGYINGVNPFDQPGVEAYKKNMFALLGRPGFEKEREELERRLRG</sequence>
<name>G6PI_CALS4</name>
<evidence type="ECO:0000255" key="1">
    <source>
        <dbReference type="HAMAP-Rule" id="MF_00473"/>
    </source>
</evidence>